<organism>
    <name type="scientific">Rhodopseudomonas palustris (strain BisA53)</name>
    <dbReference type="NCBI Taxonomy" id="316055"/>
    <lineage>
        <taxon>Bacteria</taxon>
        <taxon>Pseudomonadati</taxon>
        <taxon>Pseudomonadota</taxon>
        <taxon>Alphaproteobacteria</taxon>
        <taxon>Hyphomicrobiales</taxon>
        <taxon>Nitrobacteraceae</taxon>
        <taxon>Rhodopseudomonas</taxon>
    </lineage>
</organism>
<evidence type="ECO:0000255" key="1">
    <source>
        <dbReference type="HAMAP-Rule" id="MF_00215"/>
    </source>
</evidence>
<reference key="1">
    <citation type="submission" date="2006-09" db="EMBL/GenBank/DDBJ databases">
        <title>Complete sequence of Rhodopseudomonas palustris BisA53.</title>
        <authorList>
            <consortium name="US DOE Joint Genome Institute"/>
            <person name="Copeland A."/>
            <person name="Lucas S."/>
            <person name="Lapidus A."/>
            <person name="Barry K."/>
            <person name="Detter J.C."/>
            <person name="Glavina del Rio T."/>
            <person name="Hammon N."/>
            <person name="Israni S."/>
            <person name="Dalin E."/>
            <person name="Tice H."/>
            <person name="Pitluck S."/>
            <person name="Chain P."/>
            <person name="Malfatti S."/>
            <person name="Shin M."/>
            <person name="Vergez L."/>
            <person name="Schmutz J."/>
            <person name="Larimer F."/>
            <person name="Land M."/>
            <person name="Hauser L."/>
            <person name="Pelletier D.A."/>
            <person name="Kyrpides N."/>
            <person name="Kim E."/>
            <person name="Harwood C.S."/>
            <person name="Oda Y."/>
            <person name="Richardson P."/>
        </authorList>
    </citation>
    <scope>NUCLEOTIDE SEQUENCE [LARGE SCALE GENOMIC DNA]</scope>
    <source>
        <strain>BisA53</strain>
    </source>
</reference>
<proteinExistence type="inferred from homology"/>
<keyword id="KW-0067">ATP-binding</keyword>
<keyword id="KW-0173">Coenzyme A biosynthesis</keyword>
<keyword id="KW-0963">Cytoplasm</keyword>
<keyword id="KW-0418">Kinase</keyword>
<keyword id="KW-0547">Nucleotide-binding</keyword>
<keyword id="KW-0808">Transferase</keyword>
<comment type="catalytic activity">
    <reaction evidence="1">
        <text>(R)-pantothenate + ATP = (R)-4'-phosphopantothenate + ADP + H(+)</text>
        <dbReference type="Rhea" id="RHEA:16373"/>
        <dbReference type="ChEBI" id="CHEBI:10986"/>
        <dbReference type="ChEBI" id="CHEBI:15378"/>
        <dbReference type="ChEBI" id="CHEBI:29032"/>
        <dbReference type="ChEBI" id="CHEBI:30616"/>
        <dbReference type="ChEBI" id="CHEBI:456216"/>
        <dbReference type="EC" id="2.7.1.33"/>
    </reaction>
</comment>
<comment type="pathway">
    <text evidence="1">Cofactor biosynthesis; coenzyme A biosynthesis; CoA from (R)-pantothenate: step 1/5.</text>
</comment>
<comment type="subcellular location">
    <subcellularLocation>
        <location evidence="1">Cytoplasm</location>
    </subcellularLocation>
</comment>
<comment type="similarity">
    <text evidence="1">Belongs to the prokaryotic pantothenate kinase family.</text>
</comment>
<feature type="chain" id="PRO_1000043242" description="Pantothenate kinase">
    <location>
        <begin position="1"/>
        <end position="318"/>
    </location>
</feature>
<feature type="binding site" evidence="1">
    <location>
        <begin position="96"/>
        <end position="103"/>
    </location>
    <ligand>
        <name>ATP</name>
        <dbReference type="ChEBI" id="CHEBI:30616"/>
    </ligand>
</feature>
<dbReference type="EC" id="2.7.1.33" evidence="1"/>
<dbReference type="EMBL" id="CP000463">
    <property type="protein sequence ID" value="ABJ04323.1"/>
    <property type="molecule type" value="Genomic_DNA"/>
</dbReference>
<dbReference type="SMR" id="Q07UR1"/>
<dbReference type="STRING" id="316055.RPE_0364"/>
<dbReference type="KEGG" id="rpe:RPE_0364"/>
<dbReference type="eggNOG" id="COG1072">
    <property type="taxonomic scope" value="Bacteria"/>
</dbReference>
<dbReference type="HOGENOM" id="CLU_053818_1_1_5"/>
<dbReference type="OrthoDB" id="1550976at2"/>
<dbReference type="UniPathway" id="UPA00241">
    <property type="reaction ID" value="UER00352"/>
</dbReference>
<dbReference type="GO" id="GO:0005737">
    <property type="term" value="C:cytoplasm"/>
    <property type="evidence" value="ECO:0007669"/>
    <property type="project" value="UniProtKB-SubCell"/>
</dbReference>
<dbReference type="GO" id="GO:0005524">
    <property type="term" value="F:ATP binding"/>
    <property type="evidence" value="ECO:0007669"/>
    <property type="project" value="UniProtKB-UniRule"/>
</dbReference>
<dbReference type="GO" id="GO:0004594">
    <property type="term" value="F:pantothenate kinase activity"/>
    <property type="evidence" value="ECO:0007669"/>
    <property type="project" value="UniProtKB-UniRule"/>
</dbReference>
<dbReference type="GO" id="GO:0015937">
    <property type="term" value="P:coenzyme A biosynthetic process"/>
    <property type="evidence" value="ECO:0007669"/>
    <property type="project" value="UniProtKB-UniRule"/>
</dbReference>
<dbReference type="CDD" id="cd02025">
    <property type="entry name" value="PanK"/>
    <property type="match status" value="1"/>
</dbReference>
<dbReference type="FunFam" id="3.40.50.300:FF:000242">
    <property type="entry name" value="Pantothenate kinase"/>
    <property type="match status" value="1"/>
</dbReference>
<dbReference type="Gene3D" id="3.40.50.300">
    <property type="entry name" value="P-loop containing nucleotide triphosphate hydrolases"/>
    <property type="match status" value="1"/>
</dbReference>
<dbReference type="HAMAP" id="MF_00215">
    <property type="entry name" value="Pantothen_kinase_1"/>
    <property type="match status" value="1"/>
</dbReference>
<dbReference type="InterPro" id="IPR027417">
    <property type="entry name" value="P-loop_NTPase"/>
</dbReference>
<dbReference type="InterPro" id="IPR004566">
    <property type="entry name" value="PanK"/>
</dbReference>
<dbReference type="InterPro" id="IPR006083">
    <property type="entry name" value="PRK/URK"/>
</dbReference>
<dbReference type="NCBIfam" id="TIGR00554">
    <property type="entry name" value="panK_bact"/>
    <property type="match status" value="1"/>
</dbReference>
<dbReference type="PANTHER" id="PTHR10285">
    <property type="entry name" value="URIDINE KINASE"/>
    <property type="match status" value="1"/>
</dbReference>
<dbReference type="Pfam" id="PF00485">
    <property type="entry name" value="PRK"/>
    <property type="match status" value="1"/>
</dbReference>
<dbReference type="PIRSF" id="PIRSF000545">
    <property type="entry name" value="Pantothenate_kin"/>
    <property type="match status" value="1"/>
</dbReference>
<dbReference type="SUPFAM" id="SSF52540">
    <property type="entry name" value="P-loop containing nucleoside triphosphate hydrolases"/>
    <property type="match status" value="1"/>
</dbReference>
<protein>
    <recommendedName>
        <fullName evidence="1">Pantothenate kinase</fullName>
        <ecNumber evidence="1">2.7.1.33</ecNumber>
    </recommendedName>
    <alternativeName>
        <fullName evidence="1">Pantothenic acid kinase</fullName>
    </alternativeName>
</protein>
<accession>Q07UR1</accession>
<name>COAA_RHOP5</name>
<sequence length="318" mass="36349">MDVRADQHQYNPYRVFSRDQWAKLRDDAPMTLDAQEISALRSMHDRLDLQEVEEIYLPLSRLLSIYVASMQQLYVAQRRFLGIVDRKMPYIIGVAGSVAVGKSTTARVLQALLARWSPRPKVDLITTDGFLYPNAVLERQGIMQKKGFPESYDLPKLLAFLSDIKAGRRRVRAPVYSHLTYDIVPNSHITVDRPDILIVEGVNVLQTGKLPRDGKAVPVVSDFFDFSVYIDAEEPVLREWYVSRFLALRDTAFHDPRSYFHRYAPLSDEEATATALAIWERTNLANLEDNILPTRPRATLILKKGADHVVETVALRRL</sequence>
<gene>
    <name evidence="1" type="primary">coaA</name>
    <name type="ordered locus">RPE_0364</name>
</gene>